<dbReference type="EC" id="2.4.99.-" evidence="6"/>
<dbReference type="EMBL" id="AL662969">
    <property type="protein sequence ID" value="CAE04714.1"/>
    <property type="molecule type" value="Genomic_DNA"/>
</dbReference>
<dbReference type="EMBL" id="AL731626">
    <property type="protein sequence ID" value="CAD41185.1"/>
    <property type="molecule type" value="Genomic_DNA"/>
</dbReference>
<dbReference type="EMBL" id="AP008210">
    <property type="protein sequence ID" value="BAF15173.1"/>
    <property type="molecule type" value="Genomic_DNA"/>
</dbReference>
<dbReference type="EMBL" id="AP014960">
    <property type="protein sequence ID" value="BAS89985.1"/>
    <property type="molecule type" value="Genomic_DNA"/>
</dbReference>
<dbReference type="EMBL" id="CM000141">
    <property type="protein sequence ID" value="EAZ31283.1"/>
    <property type="molecule type" value="Genomic_DNA"/>
</dbReference>
<dbReference type="EMBL" id="AK070719">
    <property type="protein sequence ID" value="BAG92108.1"/>
    <property type="molecule type" value="mRNA"/>
</dbReference>
<dbReference type="EMBL" id="AK104647">
    <property type="protein sequence ID" value="BAG96860.1"/>
    <property type="molecule type" value="mRNA"/>
</dbReference>
<dbReference type="EMBL" id="AK104762">
    <property type="protein sequence ID" value="BAG96936.1"/>
    <property type="molecule type" value="mRNA"/>
</dbReference>
<dbReference type="FunCoup" id="Q7FA29">
    <property type="interactions" value="31"/>
</dbReference>
<dbReference type="STRING" id="39947.Q7FA29"/>
<dbReference type="CAZy" id="GT29">
    <property type="family name" value="Glycosyltransferase Family 29"/>
</dbReference>
<dbReference type="GlyCosmos" id="Q7FA29">
    <property type="glycosylation" value="1 site, No reported glycans"/>
</dbReference>
<dbReference type="PaxDb" id="39947-Q7FA29"/>
<dbReference type="EnsemblPlants" id="Os04t0506800-01">
    <property type="protein sequence ID" value="Os04t0506800-01"/>
    <property type="gene ID" value="Os04g0506800"/>
</dbReference>
<dbReference type="Gramene" id="Os04t0506800-01">
    <property type="protein sequence ID" value="Os04t0506800-01"/>
    <property type="gene ID" value="Os04g0506800"/>
</dbReference>
<dbReference type="KEGG" id="dosa:Os04g0506800"/>
<dbReference type="eggNOG" id="KOG2692">
    <property type="taxonomic scope" value="Eukaryota"/>
</dbReference>
<dbReference type="HOGENOM" id="CLU_044787_1_0_1"/>
<dbReference type="InParanoid" id="Q7FA29"/>
<dbReference type="OMA" id="PIMMYMS"/>
<dbReference type="Proteomes" id="UP000000763">
    <property type="component" value="Chromosome 4"/>
</dbReference>
<dbReference type="Proteomes" id="UP000007752">
    <property type="component" value="Chromosome 4"/>
</dbReference>
<dbReference type="Proteomes" id="UP000059680">
    <property type="component" value="Chromosome 4"/>
</dbReference>
<dbReference type="GO" id="GO:0000139">
    <property type="term" value="C:Golgi membrane"/>
    <property type="evidence" value="ECO:0007669"/>
    <property type="project" value="UniProtKB-SubCell"/>
</dbReference>
<dbReference type="GO" id="GO:0008373">
    <property type="term" value="F:sialyltransferase activity"/>
    <property type="evidence" value="ECO:0000314"/>
    <property type="project" value="UniProtKB"/>
</dbReference>
<dbReference type="GO" id="GO:0006486">
    <property type="term" value="P:protein glycosylation"/>
    <property type="evidence" value="ECO:0007669"/>
    <property type="project" value="InterPro"/>
</dbReference>
<dbReference type="CDD" id="cd19952">
    <property type="entry name" value="GT29"/>
    <property type="match status" value="1"/>
</dbReference>
<dbReference type="FunFam" id="3.90.1480.20:FF:000016">
    <property type="entry name" value="Sialyltransferase-like protein 3"/>
    <property type="match status" value="1"/>
</dbReference>
<dbReference type="Gene3D" id="3.90.1480.20">
    <property type="entry name" value="Glycosyl transferase family 29"/>
    <property type="match status" value="1"/>
</dbReference>
<dbReference type="InterPro" id="IPR001675">
    <property type="entry name" value="Glyco_trans_29"/>
</dbReference>
<dbReference type="InterPro" id="IPR038578">
    <property type="entry name" value="GT29-like_sf"/>
</dbReference>
<dbReference type="PANTHER" id="PTHR46779">
    <property type="entry name" value="BETA-1,6-GALACTOSYLTRANSFERASE GALT29A"/>
    <property type="match status" value="1"/>
</dbReference>
<dbReference type="PANTHER" id="PTHR46779:SF3">
    <property type="entry name" value="SIALYLTRANSFERASE-LIKE PROTEIN 3"/>
    <property type="match status" value="1"/>
</dbReference>
<dbReference type="Pfam" id="PF00777">
    <property type="entry name" value="Glyco_transf_29"/>
    <property type="match status" value="1"/>
</dbReference>
<comment type="function">
    <text evidence="4">Possesses sialyltransferase-like activity in vitro. Transfers sialic acid to the glycoprotein asialofetuin. The transferred sialic acid is linked to galactose of Gal-beta-1,3-GalNAc through alpha-2,6-linkage.</text>
</comment>
<comment type="subcellular location">
    <subcellularLocation>
        <location evidence="1">Golgi apparatus membrane</location>
        <topology evidence="6">Single-pass type II membrane protein</topology>
    </subcellularLocation>
</comment>
<comment type="similarity">
    <text evidence="6">Belongs to the glycosyltransferase 29 family.</text>
</comment>
<feature type="chain" id="PRO_0000434316" description="Sialyltransferase-like protein 3">
    <location>
        <begin position="1"/>
        <end position="384"/>
    </location>
</feature>
<feature type="topological domain" description="Cytoplasmic" evidence="6">
    <location>
        <begin position="1"/>
        <end position="5"/>
    </location>
</feature>
<feature type="transmembrane region" description="Helical; Signal-anchor for type II membrane protein" evidence="2">
    <location>
        <begin position="6"/>
        <end position="26"/>
    </location>
</feature>
<feature type="topological domain" description="Lumenal" evidence="6">
    <location>
        <begin position="27"/>
        <end position="384"/>
    </location>
</feature>
<feature type="glycosylation site" description="N-linked (GlcNAc...) asparagine" evidence="3">
    <location>
        <position position="241"/>
    </location>
</feature>
<keyword id="KW-0325">Glycoprotein</keyword>
<keyword id="KW-0328">Glycosyltransferase</keyword>
<keyword id="KW-0333">Golgi apparatus</keyword>
<keyword id="KW-0472">Membrane</keyword>
<keyword id="KW-1185">Reference proteome</keyword>
<keyword id="KW-0735">Signal-anchor</keyword>
<keyword id="KW-0808">Transferase</keyword>
<keyword id="KW-0812">Transmembrane</keyword>
<keyword id="KW-1133">Transmembrane helix</keyword>
<organism>
    <name type="scientific">Oryza sativa subsp. japonica</name>
    <name type="common">Rice</name>
    <dbReference type="NCBI Taxonomy" id="39947"/>
    <lineage>
        <taxon>Eukaryota</taxon>
        <taxon>Viridiplantae</taxon>
        <taxon>Streptophyta</taxon>
        <taxon>Embryophyta</taxon>
        <taxon>Tracheophyta</taxon>
        <taxon>Spermatophyta</taxon>
        <taxon>Magnoliopsida</taxon>
        <taxon>Liliopsida</taxon>
        <taxon>Poales</taxon>
        <taxon>Poaceae</taxon>
        <taxon>BOP clade</taxon>
        <taxon>Oryzoideae</taxon>
        <taxon>Oryzeae</taxon>
        <taxon>Oryzinae</taxon>
        <taxon>Oryza</taxon>
        <taxon>Oryza sativa</taxon>
    </lineage>
</organism>
<name>STLP3_ORYSJ</name>
<reference key="1">
    <citation type="journal article" date="2002" name="Nature">
        <title>Sequence and analysis of rice chromosome 4.</title>
        <authorList>
            <person name="Feng Q."/>
            <person name="Zhang Y."/>
            <person name="Hao P."/>
            <person name="Wang S."/>
            <person name="Fu G."/>
            <person name="Huang Y."/>
            <person name="Li Y."/>
            <person name="Zhu J."/>
            <person name="Liu Y."/>
            <person name="Hu X."/>
            <person name="Jia P."/>
            <person name="Zhang Y."/>
            <person name="Zhao Q."/>
            <person name="Ying K."/>
            <person name="Yu S."/>
            <person name="Tang Y."/>
            <person name="Weng Q."/>
            <person name="Zhang L."/>
            <person name="Lu Y."/>
            <person name="Mu J."/>
            <person name="Lu Y."/>
            <person name="Zhang L.S."/>
            <person name="Yu Z."/>
            <person name="Fan D."/>
            <person name="Liu X."/>
            <person name="Lu T."/>
            <person name="Li C."/>
            <person name="Wu Y."/>
            <person name="Sun T."/>
            <person name="Lei H."/>
            <person name="Li T."/>
            <person name="Hu H."/>
            <person name="Guan J."/>
            <person name="Wu M."/>
            <person name="Zhang R."/>
            <person name="Zhou B."/>
            <person name="Chen Z."/>
            <person name="Chen L."/>
            <person name="Jin Z."/>
            <person name="Wang R."/>
            <person name="Yin H."/>
            <person name="Cai Z."/>
            <person name="Ren S."/>
            <person name="Lv G."/>
            <person name="Gu W."/>
            <person name="Zhu G."/>
            <person name="Tu Y."/>
            <person name="Jia J."/>
            <person name="Zhang Y."/>
            <person name="Chen J."/>
            <person name="Kang H."/>
            <person name="Chen X."/>
            <person name="Shao C."/>
            <person name="Sun Y."/>
            <person name="Hu Q."/>
            <person name="Zhang X."/>
            <person name="Zhang W."/>
            <person name="Wang L."/>
            <person name="Ding C."/>
            <person name="Sheng H."/>
            <person name="Gu J."/>
            <person name="Chen S."/>
            <person name="Ni L."/>
            <person name="Zhu F."/>
            <person name="Chen W."/>
            <person name="Lan L."/>
            <person name="Lai Y."/>
            <person name="Cheng Z."/>
            <person name="Gu M."/>
            <person name="Jiang J."/>
            <person name="Li J."/>
            <person name="Hong G."/>
            <person name="Xue Y."/>
            <person name="Han B."/>
        </authorList>
    </citation>
    <scope>NUCLEOTIDE SEQUENCE [LARGE SCALE GENOMIC DNA]</scope>
    <source>
        <strain>cv. Nipponbare</strain>
    </source>
</reference>
<reference key="2">
    <citation type="journal article" date="2005" name="Nature">
        <title>The map-based sequence of the rice genome.</title>
        <authorList>
            <consortium name="International rice genome sequencing project (IRGSP)"/>
        </authorList>
    </citation>
    <scope>NUCLEOTIDE SEQUENCE [LARGE SCALE GENOMIC DNA]</scope>
    <source>
        <strain>cv. Nipponbare</strain>
    </source>
</reference>
<reference key="3">
    <citation type="journal article" date="2008" name="Nucleic Acids Res.">
        <title>The rice annotation project database (RAP-DB): 2008 update.</title>
        <authorList>
            <consortium name="The rice annotation project (RAP)"/>
        </authorList>
    </citation>
    <scope>GENOME REANNOTATION</scope>
    <source>
        <strain>cv. Nipponbare</strain>
    </source>
</reference>
<reference key="4">
    <citation type="journal article" date="2013" name="Rice">
        <title>Improvement of the Oryza sativa Nipponbare reference genome using next generation sequence and optical map data.</title>
        <authorList>
            <person name="Kawahara Y."/>
            <person name="de la Bastide M."/>
            <person name="Hamilton J.P."/>
            <person name="Kanamori H."/>
            <person name="McCombie W.R."/>
            <person name="Ouyang S."/>
            <person name="Schwartz D.C."/>
            <person name="Tanaka T."/>
            <person name="Wu J."/>
            <person name="Zhou S."/>
            <person name="Childs K.L."/>
            <person name="Davidson R.M."/>
            <person name="Lin H."/>
            <person name="Quesada-Ocampo L."/>
            <person name="Vaillancourt B."/>
            <person name="Sakai H."/>
            <person name="Lee S.S."/>
            <person name="Kim J."/>
            <person name="Numa H."/>
            <person name="Itoh T."/>
            <person name="Buell C.R."/>
            <person name="Matsumoto T."/>
        </authorList>
    </citation>
    <scope>GENOME REANNOTATION</scope>
    <source>
        <strain>cv. Nipponbare</strain>
    </source>
</reference>
<reference key="5">
    <citation type="journal article" date="2005" name="PLoS Biol.">
        <title>The genomes of Oryza sativa: a history of duplications.</title>
        <authorList>
            <person name="Yu J."/>
            <person name="Wang J."/>
            <person name="Lin W."/>
            <person name="Li S."/>
            <person name="Li H."/>
            <person name="Zhou J."/>
            <person name="Ni P."/>
            <person name="Dong W."/>
            <person name="Hu S."/>
            <person name="Zeng C."/>
            <person name="Zhang J."/>
            <person name="Zhang Y."/>
            <person name="Li R."/>
            <person name="Xu Z."/>
            <person name="Li S."/>
            <person name="Li X."/>
            <person name="Zheng H."/>
            <person name="Cong L."/>
            <person name="Lin L."/>
            <person name="Yin J."/>
            <person name="Geng J."/>
            <person name="Li G."/>
            <person name="Shi J."/>
            <person name="Liu J."/>
            <person name="Lv H."/>
            <person name="Li J."/>
            <person name="Wang J."/>
            <person name="Deng Y."/>
            <person name="Ran L."/>
            <person name="Shi X."/>
            <person name="Wang X."/>
            <person name="Wu Q."/>
            <person name="Li C."/>
            <person name="Ren X."/>
            <person name="Wang J."/>
            <person name="Wang X."/>
            <person name="Li D."/>
            <person name="Liu D."/>
            <person name="Zhang X."/>
            <person name="Ji Z."/>
            <person name="Zhao W."/>
            <person name="Sun Y."/>
            <person name="Zhang Z."/>
            <person name="Bao J."/>
            <person name="Han Y."/>
            <person name="Dong L."/>
            <person name="Ji J."/>
            <person name="Chen P."/>
            <person name="Wu S."/>
            <person name="Liu J."/>
            <person name="Xiao Y."/>
            <person name="Bu D."/>
            <person name="Tan J."/>
            <person name="Yang L."/>
            <person name="Ye C."/>
            <person name="Zhang J."/>
            <person name="Xu J."/>
            <person name="Zhou Y."/>
            <person name="Yu Y."/>
            <person name="Zhang B."/>
            <person name="Zhuang S."/>
            <person name="Wei H."/>
            <person name="Liu B."/>
            <person name="Lei M."/>
            <person name="Yu H."/>
            <person name="Li Y."/>
            <person name="Xu H."/>
            <person name="Wei S."/>
            <person name="He X."/>
            <person name="Fang L."/>
            <person name="Zhang Z."/>
            <person name="Zhang Y."/>
            <person name="Huang X."/>
            <person name="Su Z."/>
            <person name="Tong W."/>
            <person name="Li J."/>
            <person name="Tong Z."/>
            <person name="Li S."/>
            <person name="Ye J."/>
            <person name="Wang L."/>
            <person name="Fang L."/>
            <person name="Lei T."/>
            <person name="Chen C.-S."/>
            <person name="Chen H.-C."/>
            <person name="Xu Z."/>
            <person name="Li H."/>
            <person name="Huang H."/>
            <person name="Zhang F."/>
            <person name="Xu H."/>
            <person name="Li N."/>
            <person name="Zhao C."/>
            <person name="Li S."/>
            <person name="Dong L."/>
            <person name="Huang Y."/>
            <person name="Li L."/>
            <person name="Xi Y."/>
            <person name="Qi Q."/>
            <person name="Li W."/>
            <person name="Zhang B."/>
            <person name="Hu W."/>
            <person name="Zhang Y."/>
            <person name="Tian X."/>
            <person name="Jiao Y."/>
            <person name="Liang X."/>
            <person name="Jin J."/>
            <person name="Gao L."/>
            <person name="Zheng W."/>
            <person name="Hao B."/>
            <person name="Liu S.-M."/>
            <person name="Wang W."/>
            <person name="Yuan L."/>
            <person name="Cao M."/>
            <person name="McDermott J."/>
            <person name="Samudrala R."/>
            <person name="Wang J."/>
            <person name="Wong G.K.-S."/>
            <person name="Yang H."/>
        </authorList>
    </citation>
    <scope>NUCLEOTIDE SEQUENCE [LARGE SCALE GENOMIC DNA]</scope>
    <source>
        <strain>cv. Nipponbare</strain>
    </source>
</reference>
<reference key="6">
    <citation type="journal article" date="2003" name="Science">
        <title>Collection, mapping, and annotation of over 28,000 cDNA clones from japonica rice.</title>
        <authorList>
            <consortium name="The rice full-length cDNA consortium"/>
        </authorList>
    </citation>
    <scope>NUCLEOTIDE SEQUENCE [LARGE SCALE MRNA]</scope>
    <source>
        <strain>cv. Nipponbare</strain>
    </source>
</reference>
<reference key="7">
    <citation type="journal article" date="2006" name="J. Biochem.">
        <title>Analysis of sialyltransferase-like proteins from Oryza sativa.</title>
        <authorList>
            <person name="Takashima S."/>
            <person name="Abe T."/>
            <person name="Yoshida S."/>
            <person name="Kawahigashi H."/>
            <person name="Saito T."/>
            <person name="Tsuji S."/>
            <person name="Tsujimoto M."/>
        </authorList>
    </citation>
    <scope>FUNCTION</scope>
</reference>
<proteinExistence type="evidence at transcript level"/>
<protein>
    <recommendedName>
        <fullName evidence="5">Sialyltransferase-like protein 3</fullName>
        <shortName evidence="5">OsSTLP3</shortName>
        <ecNumber evidence="6">2.4.99.-</ecNumber>
    </recommendedName>
</protein>
<evidence type="ECO:0000250" key="1">
    <source>
        <dbReference type="UniProtKB" id="Q9SGD2"/>
    </source>
</evidence>
<evidence type="ECO:0000255" key="2"/>
<evidence type="ECO:0000255" key="3">
    <source>
        <dbReference type="PROSITE-ProRule" id="PRU00498"/>
    </source>
</evidence>
<evidence type="ECO:0000269" key="4">
    <source>
    </source>
</evidence>
<evidence type="ECO:0000303" key="5">
    <source>
    </source>
</evidence>
<evidence type="ECO:0000305" key="6"/>
<evidence type="ECO:0000312" key="7">
    <source>
        <dbReference type="EMBL" id="BAF15173.1"/>
    </source>
</evidence>
<evidence type="ECO:0000312" key="8">
    <source>
        <dbReference type="EMBL" id="CAD41185.1"/>
    </source>
</evidence>
<evidence type="ECO:0000312" key="9">
    <source>
        <dbReference type="EMBL" id="CAE04714.1"/>
    </source>
</evidence>
<evidence type="ECO:0000312" key="10">
    <source>
        <dbReference type="EMBL" id="EAZ31283.1"/>
    </source>
</evidence>
<gene>
    <name evidence="5" type="primary">STLP3</name>
    <name evidence="7" type="ordered locus">Os04g0506800</name>
    <name evidence="6" type="ordered locus">LOC_Os04g42760</name>
    <name evidence="10" type="ORF">OsJ_15390</name>
    <name evidence="9" type="ORF">OSJNBa0043L24.2</name>
    <name evidence="8" type="ORF">OSJNBb0002J11.10</name>
</gene>
<sequence>MKRRHWSHPSCGLLLLVAVFCLLLVFRCSQLRHSGDGAAAAAPDGGAGRNDGDDVDERLVELAAVDPAAMAVLQAAKRLLEGNLARAPERHRDVALRGLREWVGKQERFDPGVMSELVELIKRPIDRYNGDGGGGGEGEGRRYASCAVVGNSGILLAAEHGELIDGHELVVRLNNAPAGDGRYARHVGARTGLAFLNSNVLSQCAVPRRGACFCRAYGEGVPILTYMCNAAHFVEHAVCNNASSSSSGAADATAAAPVIVTDPRLDALCARIVKYYSLRRFARETGRPAEEWARRHEEGMFHYSSGMQAVVAAAGVCDRVSVFGFGKDASARHHYHTLQRRELDLHDYEAEYEFYRDLESRPEAIPFLRQRNSGFRLPPVSFYR</sequence>
<accession>Q7FA29</accession>
<accession>A0A0N7KJB9</accession>
<accession>Q7X7T8</accession>